<feature type="chain" id="PRO_0000235425" description="Holliday junction branch migration complex subunit RuvB">
    <location>
        <begin position="1"/>
        <end position="341"/>
    </location>
</feature>
<feature type="region of interest" description="Large ATPase domain (RuvB-L)" evidence="1">
    <location>
        <begin position="4"/>
        <end position="185"/>
    </location>
</feature>
<feature type="region of interest" description="Small ATPAse domain (RuvB-S)" evidence="1">
    <location>
        <begin position="186"/>
        <end position="256"/>
    </location>
</feature>
<feature type="region of interest" description="Head domain (RuvB-H)" evidence="1">
    <location>
        <begin position="259"/>
        <end position="341"/>
    </location>
</feature>
<feature type="binding site" evidence="1">
    <location>
        <position position="24"/>
    </location>
    <ligand>
        <name>ATP</name>
        <dbReference type="ChEBI" id="CHEBI:30616"/>
    </ligand>
</feature>
<feature type="binding site" evidence="1">
    <location>
        <position position="25"/>
    </location>
    <ligand>
        <name>ATP</name>
        <dbReference type="ChEBI" id="CHEBI:30616"/>
    </ligand>
</feature>
<feature type="binding site" evidence="1">
    <location>
        <position position="66"/>
    </location>
    <ligand>
        <name>ATP</name>
        <dbReference type="ChEBI" id="CHEBI:30616"/>
    </ligand>
</feature>
<feature type="binding site" evidence="1">
    <location>
        <position position="69"/>
    </location>
    <ligand>
        <name>ATP</name>
        <dbReference type="ChEBI" id="CHEBI:30616"/>
    </ligand>
</feature>
<feature type="binding site" evidence="1">
    <location>
        <position position="70"/>
    </location>
    <ligand>
        <name>ATP</name>
        <dbReference type="ChEBI" id="CHEBI:30616"/>
    </ligand>
</feature>
<feature type="binding site" evidence="1">
    <location>
        <position position="70"/>
    </location>
    <ligand>
        <name>Mg(2+)</name>
        <dbReference type="ChEBI" id="CHEBI:18420"/>
    </ligand>
</feature>
<feature type="binding site" evidence="1">
    <location>
        <position position="71"/>
    </location>
    <ligand>
        <name>ATP</name>
        <dbReference type="ChEBI" id="CHEBI:30616"/>
    </ligand>
</feature>
<feature type="binding site" evidence="1">
    <location>
        <begin position="132"/>
        <end position="134"/>
    </location>
    <ligand>
        <name>ATP</name>
        <dbReference type="ChEBI" id="CHEBI:30616"/>
    </ligand>
</feature>
<feature type="binding site" evidence="1">
    <location>
        <position position="175"/>
    </location>
    <ligand>
        <name>ATP</name>
        <dbReference type="ChEBI" id="CHEBI:30616"/>
    </ligand>
</feature>
<feature type="binding site" evidence="1">
    <location>
        <position position="185"/>
    </location>
    <ligand>
        <name>ATP</name>
        <dbReference type="ChEBI" id="CHEBI:30616"/>
    </ligand>
</feature>
<feature type="binding site" evidence="1">
    <location>
        <position position="222"/>
    </location>
    <ligand>
        <name>ATP</name>
        <dbReference type="ChEBI" id="CHEBI:30616"/>
    </ligand>
</feature>
<feature type="binding site" evidence="1">
    <location>
        <position position="295"/>
    </location>
    <ligand>
        <name>DNA</name>
        <dbReference type="ChEBI" id="CHEBI:16991"/>
    </ligand>
</feature>
<feature type="binding site" evidence="1">
    <location>
        <position position="314"/>
    </location>
    <ligand>
        <name>DNA</name>
        <dbReference type="ChEBI" id="CHEBI:16991"/>
    </ligand>
</feature>
<feature type="binding site" evidence="1">
    <location>
        <position position="319"/>
    </location>
    <ligand>
        <name>DNA</name>
        <dbReference type="ChEBI" id="CHEBI:16991"/>
    </ligand>
</feature>
<name>RUVB_THIDA</name>
<keyword id="KW-0067">ATP-binding</keyword>
<keyword id="KW-0963">Cytoplasm</keyword>
<keyword id="KW-0227">DNA damage</keyword>
<keyword id="KW-0233">DNA recombination</keyword>
<keyword id="KW-0234">DNA repair</keyword>
<keyword id="KW-0238">DNA-binding</keyword>
<keyword id="KW-0378">Hydrolase</keyword>
<keyword id="KW-0547">Nucleotide-binding</keyword>
<keyword id="KW-1185">Reference proteome</keyword>
<reference key="1">
    <citation type="journal article" date="2006" name="J. Bacteriol.">
        <title>The genome sequence of the obligately chemolithoautotrophic, facultatively anaerobic bacterium Thiobacillus denitrificans.</title>
        <authorList>
            <person name="Beller H.R."/>
            <person name="Chain P.S."/>
            <person name="Letain T.E."/>
            <person name="Chakicherla A."/>
            <person name="Larimer F.W."/>
            <person name="Richardson P.M."/>
            <person name="Coleman M.A."/>
            <person name="Wood A.P."/>
            <person name="Kelly D.P."/>
        </authorList>
    </citation>
    <scope>NUCLEOTIDE SEQUENCE [LARGE SCALE GENOMIC DNA]</scope>
    <source>
        <strain>ATCC 25259 / T1</strain>
    </source>
</reference>
<accession>Q3SGT3</accession>
<evidence type="ECO:0000255" key="1">
    <source>
        <dbReference type="HAMAP-Rule" id="MF_00016"/>
    </source>
</evidence>
<gene>
    <name evidence="1" type="primary">ruvB</name>
    <name type="ordered locus">Tbd_2211</name>
</gene>
<dbReference type="EC" id="3.6.4.-" evidence="1"/>
<dbReference type="EMBL" id="CP000116">
    <property type="protein sequence ID" value="AAZ98164.1"/>
    <property type="molecule type" value="Genomic_DNA"/>
</dbReference>
<dbReference type="RefSeq" id="WP_011312723.1">
    <property type="nucleotide sequence ID" value="NC_007404.1"/>
</dbReference>
<dbReference type="SMR" id="Q3SGT3"/>
<dbReference type="STRING" id="292415.Tbd_2211"/>
<dbReference type="KEGG" id="tbd:Tbd_2211"/>
<dbReference type="eggNOG" id="COG2255">
    <property type="taxonomic scope" value="Bacteria"/>
</dbReference>
<dbReference type="HOGENOM" id="CLU_055599_1_0_4"/>
<dbReference type="OrthoDB" id="9804478at2"/>
<dbReference type="Proteomes" id="UP000008291">
    <property type="component" value="Chromosome"/>
</dbReference>
<dbReference type="GO" id="GO:0005737">
    <property type="term" value="C:cytoplasm"/>
    <property type="evidence" value="ECO:0007669"/>
    <property type="project" value="UniProtKB-SubCell"/>
</dbReference>
<dbReference type="GO" id="GO:0048476">
    <property type="term" value="C:Holliday junction resolvase complex"/>
    <property type="evidence" value="ECO:0007669"/>
    <property type="project" value="UniProtKB-UniRule"/>
</dbReference>
<dbReference type="GO" id="GO:0005524">
    <property type="term" value="F:ATP binding"/>
    <property type="evidence" value="ECO:0007669"/>
    <property type="project" value="UniProtKB-UniRule"/>
</dbReference>
<dbReference type="GO" id="GO:0016887">
    <property type="term" value="F:ATP hydrolysis activity"/>
    <property type="evidence" value="ECO:0007669"/>
    <property type="project" value="InterPro"/>
</dbReference>
<dbReference type="GO" id="GO:0000400">
    <property type="term" value="F:four-way junction DNA binding"/>
    <property type="evidence" value="ECO:0007669"/>
    <property type="project" value="UniProtKB-UniRule"/>
</dbReference>
<dbReference type="GO" id="GO:0009378">
    <property type="term" value="F:four-way junction helicase activity"/>
    <property type="evidence" value="ECO:0007669"/>
    <property type="project" value="InterPro"/>
</dbReference>
<dbReference type="GO" id="GO:0006310">
    <property type="term" value="P:DNA recombination"/>
    <property type="evidence" value="ECO:0007669"/>
    <property type="project" value="UniProtKB-UniRule"/>
</dbReference>
<dbReference type="GO" id="GO:0006281">
    <property type="term" value="P:DNA repair"/>
    <property type="evidence" value="ECO:0007669"/>
    <property type="project" value="UniProtKB-UniRule"/>
</dbReference>
<dbReference type="CDD" id="cd00009">
    <property type="entry name" value="AAA"/>
    <property type="match status" value="1"/>
</dbReference>
<dbReference type="FunFam" id="1.10.10.10:FF:000086">
    <property type="entry name" value="Holliday junction ATP-dependent DNA helicase RuvB"/>
    <property type="match status" value="1"/>
</dbReference>
<dbReference type="FunFam" id="3.40.50.300:FF:000073">
    <property type="entry name" value="Holliday junction ATP-dependent DNA helicase RuvB"/>
    <property type="match status" value="1"/>
</dbReference>
<dbReference type="Gene3D" id="1.10.8.60">
    <property type="match status" value="1"/>
</dbReference>
<dbReference type="Gene3D" id="3.40.50.300">
    <property type="entry name" value="P-loop containing nucleotide triphosphate hydrolases"/>
    <property type="match status" value="1"/>
</dbReference>
<dbReference type="Gene3D" id="1.10.10.10">
    <property type="entry name" value="Winged helix-like DNA-binding domain superfamily/Winged helix DNA-binding domain"/>
    <property type="match status" value="1"/>
</dbReference>
<dbReference type="HAMAP" id="MF_00016">
    <property type="entry name" value="DNA_HJ_migration_RuvB"/>
    <property type="match status" value="1"/>
</dbReference>
<dbReference type="InterPro" id="IPR003593">
    <property type="entry name" value="AAA+_ATPase"/>
</dbReference>
<dbReference type="InterPro" id="IPR041445">
    <property type="entry name" value="AAA_lid_4"/>
</dbReference>
<dbReference type="InterPro" id="IPR004605">
    <property type="entry name" value="DNA_helicase_Holl-junc_RuvB"/>
</dbReference>
<dbReference type="InterPro" id="IPR027417">
    <property type="entry name" value="P-loop_NTPase"/>
</dbReference>
<dbReference type="InterPro" id="IPR008824">
    <property type="entry name" value="RuvB-like_N"/>
</dbReference>
<dbReference type="InterPro" id="IPR008823">
    <property type="entry name" value="RuvB_C"/>
</dbReference>
<dbReference type="InterPro" id="IPR036388">
    <property type="entry name" value="WH-like_DNA-bd_sf"/>
</dbReference>
<dbReference type="InterPro" id="IPR036390">
    <property type="entry name" value="WH_DNA-bd_sf"/>
</dbReference>
<dbReference type="NCBIfam" id="NF000868">
    <property type="entry name" value="PRK00080.1"/>
    <property type="match status" value="1"/>
</dbReference>
<dbReference type="NCBIfam" id="TIGR00635">
    <property type="entry name" value="ruvB"/>
    <property type="match status" value="1"/>
</dbReference>
<dbReference type="PANTHER" id="PTHR42848">
    <property type="match status" value="1"/>
</dbReference>
<dbReference type="PANTHER" id="PTHR42848:SF1">
    <property type="entry name" value="HOLLIDAY JUNCTION BRANCH MIGRATION COMPLEX SUBUNIT RUVB"/>
    <property type="match status" value="1"/>
</dbReference>
<dbReference type="Pfam" id="PF17864">
    <property type="entry name" value="AAA_lid_4"/>
    <property type="match status" value="1"/>
</dbReference>
<dbReference type="Pfam" id="PF05491">
    <property type="entry name" value="RuvB_C"/>
    <property type="match status" value="1"/>
</dbReference>
<dbReference type="Pfam" id="PF05496">
    <property type="entry name" value="RuvB_N"/>
    <property type="match status" value="1"/>
</dbReference>
<dbReference type="SMART" id="SM00382">
    <property type="entry name" value="AAA"/>
    <property type="match status" value="1"/>
</dbReference>
<dbReference type="SUPFAM" id="SSF52540">
    <property type="entry name" value="P-loop containing nucleoside triphosphate hydrolases"/>
    <property type="match status" value="1"/>
</dbReference>
<dbReference type="SUPFAM" id="SSF46785">
    <property type="entry name" value="Winged helix' DNA-binding domain"/>
    <property type="match status" value="1"/>
</dbReference>
<comment type="function">
    <text evidence="1">The RuvA-RuvB-RuvC complex processes Holliday junction (HJ) DNA during genetic recombination and DNA repair, while the RuvA-RuvB complex plays an important role in the rescue of blocked DNA replication forks via replication fork reversal (RFR). RuvA specifically binds to HJ cruciform DNA, conferring on it an open structure. The RuvB hexamer acts as an ATP-dependent pump, pulling dsDNA into and through the RuvAB complex. RuvB forms 2 homohexamers on either side of HJ DNA bound by 1 or 2 RuvA tetramers; 4 subunits per hexamer contact DNA at a time. Coordinated motions by a converter formed by DNA-disengaged RuvB subunits stimulates ATP hydrolysis and nucleotide exchange. Immobilization of the converter enables RuvB to convert the ATP-contained energy into a lever motion, pulling 2 nucleotides of DNA out of the RuvA tetramer per ATP hydrolyzed, thus driving DNA branch migration. The RuvB motors rotate together with the DNA substrate, which together with the progressing nucleotide cycle form the mechanistic basis for DNA recombination by continuous HJ branch migration. Branch migration allows RuvC to scan DNA until it finds its consensus sequence, where it cleaves and resolves cruciform DNA.</text>
</comment>
<comment type="catalytic activity">
    <reaction evidence="1">
        <text>ATP + H2O = ADP + phosphate + H(+)</text>
        <dbReference type="Rhea" id="RHEA:13065"/>
        <dbReference type="ChEBI" id="CHEBI:15377"/>
        <dbReference type="ChEBI" id="CHEBI:15378"/>
        <dbReference type="ChEBI" id="CHEBI:30616"/>
        <dbReference type="ChEBI" id="CHEBI:43474"/>
        <dbReference type="ChEBI" id="CHEBI:456216"/>
    </reaction>
</comment>
<comment type="subunit">
    <text evidence="1">Homohexamer. Forms an RuvA(8)-RuvB(12)-Holliday junction (HJ) complex. HJ DNA is sandwiched between 2 RuvA tetramers; dsDNA enters through RuvA and exits via RuvB. An RuvB hexamer assembles on each DNA strand where it exits the tetramer. Each RuvB hexamer is contacted by two RuvA subunits (via domain III) on 2 adjacent RuvB subunits; this complex drives branch migration. In the full resolvosome a probable DNA-RuvA(4)-RuvB(12)-RuvC(2) complex forms which resolves the HJ.</text>
</comment>
<comment type="subcellular location">
    <subcellularLocation>
        <location evidence="1">Cytoplasm</location>
    </subcellularLocation>
</comment>
<comment type="domain">
    <text evidence="1">Has 3 domains, the large (RuvB-L) and small ATPase (RuvB-S) domains and the C-terminal head (RuvB-H) domain. The head domain binds DNA, while the ATPase domains jointly bind ATP, ADP or are empty depending on the state of the subunit in the translocation cycle. During a single DNA translocation step the structure of each domain remains the same, but their relative positions change.</text>
</comment>
<comment type="similarity">
    <text evidence="1">Belongs to the RuvB family.</text>
</comment>
<protein>
    <recommendedName>
        <fullName evidence="1">Holliday junction branch migration complex subunit RuvB</fullName>
        <ecNumber evidence="1">3.6.4.-</ecNumber>
    </recommendedName>
</protein>
<sequence length="341" mass="37299">MIETDRLIVPTAVGPQEEQIERALRPRTLAEYVGQAKAREQLEIFIHAARKRSEALDHVLLFGPPGLGKTTLAHIIAREMGVNLRQTSGPVLERAGDLAALLTNLEPHDVLFIDEIHRLSPVVEEVLYPALEDFQIDIMIGEGPAARSVKLDLPPFTLVGATTRAGMLTNPLRDRFGIVARLEFYSAEELGYIVHRSAGLLQMNLDEAGALEIARRSRGTPRIANRLLRRVRDYAEVKAGGEATGAVADAALVMLDVDRAGLDVMDRKLLGAVVEKFMGGPVGLDNLAAAIGEERDTIEDVLEPYLIQQGYLQRTPRGRVATPLAYRHLGIATPASDAELF</sequence>
<proteinExistence type="inferred from homology"/>
<organism>
    <name type="scientific">Thiobacillus denitrificans (strain ATCC 25259 / T1)</name>
    <dbReference type="NCBI Taxonomy" id="292415"/>
    <lineage>
        <taxon>Bacteria</taxon>
        <taxon>Pseudomonadati</taxon>
        <taxon>Pseudomonadota</taxon>
        <taxon>Betaproteobacteria</taxon>
        <taxon>Nitrosomonadales</taxon>
        <taxon>Thiobacillaceae</taxon>
        <taxon>Thiobacillus</taxon>
    </lineage>
</organism>